<protein>
    <recommendedName>
        <fullName evidence="1">tRNA pseudouridine synthase Pus10</fullName>
        <ecNumber evidence="1">5.4.99.25</ecNumber>
    </recommendedName>
    <alternativeName>
        <fullName evidence="1">tRNA pseudouridine 54/55 synthase</fullName>
        <shortName evidence="1">Psi54/55 synthase</shortName>
    </alternativeName>
</protein>
<comment type="function">
    <text evidence="1">Responsible for synthesis of pseudouridine from uracil-54 and uracil-55 in the psi GC loop of transfer RNAs.</text>
</comment>
<comment type="catalytic activity">
    <reaction evidence="1">
        <text>uridine(54) in tRNA = pseudouridine(54) in tRNA</text>
        <dbReference type="Rhea" id="RHEA:57876"/>
        <dbReference type="Rhea" id="RHEA-COMP:10193"/>
        <dbReference type="Rhea" id="RHEA-COMP:14141"/>
        <dbReference type="ChEBI" id="CHEBI:65314"/>
        <dbReference type="ChEBI" id="CHEBI:65315"/>
    </reaction>
</comment>
<comment type="catalytic activity">
    <reaction evidence="1">
        <text>uridine(55) in tRNA = pseudouridine(55) in tRNA</text>
        <dbReference type="Rhea" id="RHEA:42532"/>
        <dbReference type="Rhea" id="RHEA-COMP:10101"/>
        <dbReference type="Rhea" id="RHEA-COMP:10102"/>
        <dbReference type="ChEBI" id="CHEBI:65314"/>
        <dbReference type="ChEBI" id="CHEBI:65315"/>
        <dbReference type="EC" id="5.4.99.25"/>
    </reaction>
</comment>
<comment type="similarity">
    <text evidence="1">Belongs to the pseudouridine synthase Pus10 family.</text>
</comment>
<sequence length="400" mass="43128">MNEDPAQQAMKVLAKYPLCDRCLGRLFAGLGRGLSNAERGRALKLSVVMSLHAMSLSGRLPENARDVLANAGGAAAQVYVELFGSPPEHRSCYICNDALDKFLDEMPQRVADAVKEWGGSTFLVGAKVDPGVIAREERIKAEFGLAFGESIKSEIKRELGKRAQQLGPKVSFDRPDVVVMVSFPDGSVSVQPRRLVVKGLYRRLRRDLQLRPREALSHPLVARLINDTRSSRVGIVGLVRDEKEVRALGLGIPVEFHLGGPRVRLVPPDGSIIEAEGASLEVNSSVEASGPEDLSRRVRVYRCVLYVEGGAFESLQLAAASLRGKEVRQKFMGKEVSGVVRGAECVDMGGGLAECIIALDERLHVMELVSGSGTEPSLSGLLGTAAECVVADLLGVIPLR</sequence>
<proteinExistence type="inferred from homology"/>
<organism>
    <name type="scientific">Acidilobus saccharovorans (strain DSM 16705 / JCM 18335 / VKM B-2471 / 345-15)</name>
    <dbReference type="NCBI Taxonomy" id="666510"/>
    <lineage>
        <taxon>Archaea</taxon>
        <taxon>Thermoproteota</taxon>
        <taxon>Thermoprotei</taxon>
        <taxon>Acidilobales</taxon>
        <taxon>Acidilobaceae</taxon>
        <taxon>Acidilobus</taxon>
    </lineage>
</organism>
<reference key="1">
    <citation type="journal article" date="2010" name="Appl. Environ. Microbiol.">
        <title>The genome sequence of the crenarchaeon Acidilobus saccharovorans supports a new order, Acidilobales, and suggests an important ecological role in terrestrial acidic hot springs.</title>
        <authorList>
            <person name="Mardanov A.V."/>
            <person name="Svetlitchnyi V.A."/>
            <person name="Beletsky A.V."/>
            <person name="Prokofeva M.I."/>
            <person name="Bonch-Osmolovskaya E.A."/>
            <person name="Ravin N.V."/>
            <person name="Skryabin K.G."/>
        </authorList>
    </citation>
    <scope>NUCLEOTIDE SEQUENCE [LARGE SCALE GENOMIC DNA]</scope>
    <source>
        <strain>DSM 16705 / JCM 18335 / VKM B-2471 / 345-15</strain>
    </source>
</reference>
<gene>
    <name evidence="1" type="primary">pus10</name>
    <name type="ordered locus">ASAC_0174</name>
</gene>
<evidence type="ECO:0000255" key="1">
    <source>
        <dbReference type="HAMAP-Rule" id="MF_01893"/>
    </source>
</evidence>
<keyword id="KW-0413">Isomerase</keyword>
<keyword id="KW-1185">Reference proteome</keyword>
<keyword id="KW-0694">RNA-binding</keyword>
<keyword id="KW-0819">tRNA processing</keyword>
<name>PUS10_ACIS3</name>
<accession>D9PZU4</accession>
<feature type="chain" id="PRO_0000407380" description="tRNA pseudouridine synthase Pus10">
    <location>
        <begin position="1"/>
        <end position="400"/>
    </location>
</feature>
<feature type="domain" description="THUMP" evidence="1">
    <location>
        <begin position="77"/>
        <end position="194"/>
    </location>
</feature>
<feature type="binding site" evidence="1">
    <location>
        <position position="301"/>
    </location>
    <ligand>
        <name>substrate</name>
    </ligand>
</feature>
<dbReference type="EC" id="5.4.99.25" evidence="1"/>
<dbReference type="EMBL" id="CP001742">
    <property type="protein sequence ID" value="ADL18582.1"/>
    <property type="molecule type" value="Genomic_DNA"/>
</dbReference>
<dbReference type="RefSeq" id="WP_013266094.1">
    <property type="nucleotide sequence ID" value="NC_014374.1"/>
</dbReference>
<dbReference type="STRING" id="666510.ASAC_0174"/>
<dbReference type="GeneID" id="9498390"/>
<dbReference type="KEGG" id="asc:ASAC_0174"/>
<dbReference type="eggNOG" id="arCOG01015">
    <property type="taxonomic scope" value="Archaea"/>
</dbReference>
<dbReference type="HOGENOM" id="CLU_028780_2_0_2"/>
<dbReference type="InParanoid" id="D9PZU4"/>
<dbReference type="OrthoDB" id="10348at2157"/>
<dbReference type="Proteomes" id="UP000000346">
    <property type="component" value="Chromosome"/>
</dbReference>
<dbReference type="GO" id="GO:0000049">
    <property type="term" value="F:tRNA binding"/>
    <property type="evidence" value="ECO:0007669"/>
    <property type="project" value="InterPro"/>
</dbReference>
<dbReference type="GO" id="GO:0160148">
    <property type="term" value="F:tRNA pseudouridine(55) synthase activity"/>
    <property type="evidence" value="ECO:0007669"/>
    <property type="project" value="UniProtKB-EC"/>
</dbReference>
<dbReference type="GO" id="GO:0031119">
    <property type="term" value="P:tRNA pseudouridine synthesis"/>
    <property type="evidence" value="ECO:0007669"/>
    <property type="project" value="UniProtKB-UniRule"/>
</dbReference>
<dbReference type="HAMAP" id="MF_01893">
    <property type="entry name" value="Pus10_arch"/>
    <property type="match status" value="1"/>
</dbReference>
<dbReference type="InterPro" id="IPR005912">
    <property type="entry name" value="Pus10"/>
</dbReference>
<dbReference type="InterPro" id="IPR055174">
    <property type="entry name" value="Pus10_THUMP_arc"/>
</dbReference>
<dbReference type="Pfam" id="PF22023">
    <property type="entry name" value="Pus10_THUMP_arc"/>
    <property type="match status" value="1"/>
</dbReference>